<organism>
    <name type="scientific">Xenopus tropicalis</name>
    <name type="common">Western clawed frog</name>
    <name type="synonym">Silurana tropicalis</name>
    <dbReference type="NCBI Taxonomy" id="8364"/>
    <lineage>
        <taxon>Eukaryota</taxon>
        <taxon>Metazoa</taxon>
        <taxon>Chordata</taxon>
        <taxon>Craniata</taxon>
        <taxon>Vertebrata</taxon>
        <taxon>Euteleostomi</taxon>
        <taxon>Amphibia</taxon>
        <taxon>Batrachia</taxon>
        <taxon>Anura</taxon>
        <taxon>Pipoidea</taxon>
        <taxon>Pipidae</taxon>
        <taxon>Xenopodinae</taxon>
        <taxon>Xenopus</taxon>
        <taxon>Silurana</taxon>
    </lineage>
</organism>
<evidence type="ECO:0000256" key="1">
    <source>
        <dbReference type="SAM" id="MobiDB-lite"/>
    </source>
</evidence>
<evidence type="ECO:0000305" key="2"/>
<sequence>MFQCLEPERNEETGPVYVRERGKLSVVGSHVSELRTRPCRLFSKGFSVELCGKQEDTSRHRQKPFIFTYTKEGSLRYSAKSLFTLTLDLITDNIHYVDSLMGFPDQIAEKLFTAAEAKHKFFTPCNGVMALRKFTEAYGDLVLSSLCLRGRYLLISERLEEIKSFQCLRSLDLSCCKLGDEHELLEHLSSDPMSSLTELYLKDNCFSDTGIRKMTASLRVLGKGLDALKVLDLSSNPGITDRGVLFLFGFKLLQFLDLSDTSIQDRSRTVKKIETKIGLVLSKKPIIQFEHRNCRTQGWAEQLLDQWENYIFSAIKPKDTLKSRKAAQQFYGKETKQNPLDSGICTLLTPVEQKQTHLQFFRPEEQKDSDSSKSDKRQRSTKRTGADPGQEDCTIAPATKRPRVTLTAADWDLLNSY</sequence>
<keyword id="KW-0433">Leucine-rich repeat</keyword>
<keyword id="KW-1185">Reference proteome</keyword>
<keyword id="KW-0677">Repeat</keyword>
<feature type="chain" id="PRO_0000360043" description="Leucine-rich repeat-containing protein 42">
    <location>
        <begin position="1"/>
        <end position="417"/>
    </location>
</feature>
<feature type="repeat" description="LRR 1">
    <location>
        <begin position="167"/>
        <end position="188"/>
    </location>
</feature>
<feature type="repeat" description="LRR 2">
    <location>
        <begin position="195"/>
        <end position="215"/>
    </location>
</feature>
<feature type="repeat" description="LRR 3">
    <location>
        <begin position="227"/>
        <end position="249"/>
    </location>
</feature>
<feature type="repeat" description="LRR 4">
    <location>
        <begin position="252"/>
        <end position="273"/>
    </location>
</feature>
<feature type="region of interest" description="Disordered" evidence="1">
    <location>
        <begin position="360"/>
        <end position="399"/>
    </location>
</feature>
<feature type="compositionally biased region" description="Basic and acidic residues" evidence="1">
    <location>
        <begin position="362"/>
        <end position="378"/>
    </location>
</feature>
<accession>Q0V9Y8</accession>
<dbReference type="EMBL" id="BC121343">
    <property type="protein sequence ID" value="AAI21344.1"/>
    <property type="status" value="ALT_INIT"/>
    <property type="molecule type" value="mRNA"/>
</dbReference>
<dbReference type="FunCoup" id="Q0V9Y8">
    <property type="interactions" value="896"/>
</dbReference>
<dbReference type="STRING" id="8364.ENSXETP00000043064"/>
<dbReference type="PaxDb" id="8364-ENSXETP00000043212"/>
<dbReference type="eggNOG" id="ENOG502QQJZ">
    <property type="taxonomic scope" value="Eukaryota"/>
</dbReference>
<dbReference type="InParanoid" id="Q0V9Y8"/>
<dbReference type="Proteomes" id="UP000008143">
    <property type="component" value="Unplaced"/>
</dbReference>
<dbReference type="Gene3D" id="3.80.10.10">
    <property type="entry name" value="Ribonuclease Inhibitor"/>
    <property type="match status" value="1"/>
</dbReference>
<dbReference type="InterPro" id="IPR001611">
    <property type="entry name" value="Leu-rich_rpt"/>
</dbReference>
<dbReference type="InterPro" id="IPR032675">
    <property type="entry name" value="LRR_dom_sf"/>
</dbReference>
<dbReference type="InterPro" id="IPR039631">
    <property type="entry name" value="LRRC42"/>
</dbReference>
<dbReference type="PANTHER" id="PTHR31994">
    <property type="entry name" value="LEUCINE-RICH REPEAT-CONTAINING PROTEIN 42"/>
    <property type="match status" value="1"/>
</dbReference>
<dbReference type="PANTHER" id="PTHR31994:SF3">
    <property type="entry name" value="LEUCINE-RICH REPEAT-CONTAINING PROTEIN 42"/>
    <property type="match status" value="1"/>
</dbReference>
<dbReference type="Pfam" id="PF13516">
    <property type="entry name" value="LRR_6"/>
    <property type="match status" value="3"/>
</dbReference>
<dbReference type="SMART" id="SM00368">
    <property type="entry name" value="LRR_RI"/>
    <property type="match status" value="2"/>
</dbReference>
<dbReference type="SUPFAM" id="SSF52047">
    <property type="entry name" value="RNI-like"/>
    <property type="match status" value="1"/>
</dbReference>
<protein>
    <recommendedName>
        <fullName>Leucine-rich repeat-containing protein 42</fullName>
    </recommendedName>
</protein>
<comment type="similarity">
    <text evidence="2">Belongs to the LRRC42 family.</text>
</comment>
<comment type="sequence caution" evidence="2">
    <conflict type="erroneous initiation">
        <sequence resource="EMBL-CDS" id="AAI21344"/>
    </conflict>
</comment>
<proteinExistence type="evidence at transcript level"/>
<reference key="1">
    <citation type="submission" date="2006-08" db="EMBL/GenBank/DDBJ databases">
        <authorList>
            <consortium name="NIH - Xenopus Gene Collection (XGC) project"/>
        </authorList>
    </citation>
    <scope>NUCLEOTIDE SEQUENCE [LARGE SCALE MRNA]</scope>
    <source>
        <tissue>Testis</tissue>
    </source>
</reference>
<gene>
    <name type="primary">lrrc42</name>
</gene>
<name>LRC42_XENTR</name>